<protein>
    <recommendedName>
        <fullName evidence="2">Ornithine carbamoyltransferase</fullName>
        <shortName evidence="2">OTCase</shortName>
        <ecNumber evidence="2">2.1.3.3</ecNumber>
    </recommendedName>
</protein>
<name>OTC_CLOB1</name>
<gene>
    <name evidence="2" type="primary">arcB</name>
    <name type="ordered locus">CLB_2534</name>
</gene>
<feature type="chain" id="PRO_1000065087" description="Ornithine carbamoyltransferase">
    <location>
        <begin position="1"/>
        <end position="333"/>
    </location>
</feature>
<feature type="binding site" evidence="2">
    <location>
        <begin position="56"/>
        <end position="59"/>
    </location>
    <ligand>
        <name>carbamoyl phosphate</name>
        <dbReference type="ChEBI" id="CHEBI:58228"/>
    </ligand>
</feature>
<feature type="binding site" evidence="2">
    <location>
        <position position="107"/>
    </location>
    <ligand>
        <name>carbamoyl phosphate</name>
        <dbReference type="ChEBI" id="CHEBI:58228"/>
    </ligand>
</feature>
<feature type="binding site" evidence="2">
    <location>
        <begin position="134"/>
        <end position="137"/>
    </location>
    <ligand>
        <name>carbamoyl phosphate</name>
        <dbReference type="ChEBI" id="CHEBI:58228"/>
    </ligand>
</feature>
<feature type="binding site" evidence="2">
    <location>
        <position position="167"/>
    </location>
    <ligand>
        <name>L-ornithine</name>
        <dbReference type="ChEBI" id="CHEBI:46911"/>
    </ligand>
</feature>
<feature type="binding site" evidence="2">
    <location>
        <position position="231"/>
    </location>
    <ligand>
        <name>L-ornithine</name>
        <dbReference type="ChEBI" id="CHEBI:46911"/>
    </ligand>
</feature>
<feature type="binding site" evidence="2">
    <location>
        <begin position="235"/>
        <end position="236"/>
    </location>
    <ligand>
        <name>L-ornithine</name>
        <dbReference type="ChEBI" id="CHEBI:46911"/>
    </ligand>
</feature>
<feature type="binding site" evidence="2">
    <location>
        <begin position="273"/>
        <end position="274"/>
    </location>
    <ligand>
        <name>carbamoyl phosphate</name>
        <dbReference type="ChEBI" id="CHEBI:58228"/>
    </ligand>
</feature>
<feature type="binding site" evidence="2">
    <location>
        <position position="318"/>
    </location>
    <ligand>
        <name>carbamoyl phosphate</name>
        <dbReference type="ChEBI" id="CHEBI:58228"/>
    </ligand>
</feature>
<sequence length="333" mass="37231">MFNLKNRNFLTLMDFTPKEINYFLDLARDLKRAKYTGTEVQRLKGKNIALIFEKASTRTRCAFEVGAKDQGAHVTYLGPTGSHIGKKESAADTARVLGRMYDGIEYRGFGQEIVETLAEYAGVPVWNGLTDEDHPTQILADFLTIREHFNKPLNEIKFAYVGDGANNMANALMIGAVKMGMDFRIVSPKEIPTDAALVAKCKEIAAETGAKVTITDNIEEGVKGCDVLYTDVWVSMGEPDSVWESKIKLLTPYRVDMNMIKMTGNPDAKFMHCLPAFHDEETAVGKEIKEKYGLSEMEVSHELFESKYSIVFDEAENRMHTIKAVMVATLGDQ</sequence>
<evidence type="ECO:0000250" key="1"/>
<evidence type="ECO:0000255" key="2">
    <source>
        <dbReference type="HAMAP-Rule" id="MF_01109"/>
    </source>
</evidence>
<dbReference type="EC" id="2.1.3.3" evidence="2"/>
<dbReference type="EMBL" id="CP000726">
    <property type="protein sequence ID" value="ABS33574.1"/>
    <property type="molecule type" value="Genomic_DNA"/>
</dbReference>
<dbReference type="SMR" id="A7FWM4"/>
<dbReference type="KEGG" id="cba:CLB_2534"/>
<dbReference type="HOGENOM" id="CLU_043846_3_1_9"/>
<dbReference type="UniPathway" id="UPA00254">
    <property type="reaction ID" value="UER00365"/>
</dbReference>
<dbReference type="GO" id="GO:0005737">
    <property type="term" value="C:cytoplasm"/>
    <property type="evidence" value="ECO:0007669"/>
    <property type="project" value="UniProtKB-SubCell"/>
</dbReference>
<dbReference type="GO" id="GO:0016597">
    <property type="term" value="F:amino acid binding"/>
    <property type="evidence" value="ECO:0007669"/>
    <property type="project" value="InterPro"/>
</dbReference>
<dbReference type="GO" id="GO:0004585">
    <property type="term" value="F:ornithine carbamoyltransferase activity"/>
    <property type="evidence" value="ECO:0007669"/>
    <property type="project" value="UniProtKB-UniRule"/>
</dbReference>
<dbReference type="GO" id="GO:0042450">
    <property type="term" value="P:arginine biosynthetic process via ornithine"/>
    <property type="evidence" value="ECO:0007669"/>
    <property type="project" value="TreeGrafter"/>
</dbReference>
<dbReference type="GO" id="GO:0019547">
    <property type="term" value="P:arginine catabolic process to ornithine"/>
    <property type="evidence" value="ECO:0007669"/>
    <property type="project" value="UniProtKB-UniRule"/>
</dbReference>
<dbReference type="GO" id="GO:0019240">
    <property type="term" value="P:citrulline biosynthetic process"/>
    <property type="evidence" value="ECO:0007669"/>
    <property type="project" value="TreeGrafter"/>
</dbReference>
<dbReference type="FunFam" id="3.40.50.1370:FF:000004">
    <property type="entry name" value="Ornithine carbamoyltransferase"/>
    <property type="match status" value="1"/>
</dbReference>
<dbReference type="Gene3D" id="3.40.50.1370">
    <property type="entry name" value="Aspartate/ornithine carbamoyltransferase"/>
    <property type="match status" value="2"/>
</dbReference>
<dbReference type="HAMAP" id="MF_01109">
    <property type="entry name" value="OTCase"/>
    <property type="match status" value="1"/>
</dbReference>
<dbReference type="InterPro" id="IPR006132">
    <property type="entry name" value="Asp/Orn_carbamoyltranf_P-bd"/>
</dbReference>
<dbReference type="InterPro" id="IPR006130">
    <property type="entry name" value="Asp/Orn_carbamoylTrfase"/>
</dbReference>
<dbReference type="InterPro" id="IPR036901">
    <property type="entry name" value="Asp/Orn_carbamoylTrfase_sf"/>
</dbReference>
<dbReference type="InterPro" id="IPR006131">
    <property type="entry name" value="Asp_carbamoyltransf_Asp/Orn-bd"/>
</dbReference>
<dbReference type="InterPro" id="IPR002292">
    <property type="entry name" value="Orn/put_carbamltrans"/>
</dbReference>
<dbReference type="InterPro" id="IPR024904">
    <property type="entry name" value="OTCase_ArgI"/>
</dbReference>
<dbReference type="NCBIfam" id="TIGR00658">
    <property type="entry name" value="orni_carb_tr"/>
    <property type="match status" value="1"/>
</dbReference>
<dbReference type="NCBIfam" id="NF003286">
    <property type="entry name" value="PRK04284.1"/>
    <property type="match status" value="1"/>
</dbReference>
<dbReference type="PANTHER" id="PTHR45753:SF2">
    <property type="entry name" value="ORNITHINE CARBAMOYLTRANSFERASE"/>
    <property type="match status" value="1"/>
</dbReference>
<dbReference type="PANTHER" id="PTHR45753">
    <property type="entry name" value="ORNITHINE CARBAMOYLTRANSFERASE, MITOCHONDRIAL"/>
    <property type="match status" value="1"/>
</dbReference>
<dbReference type="Pfam" id="PF00185">
    <property type="entry name" value="OTCace"/>
    <property type="match status" value="1"/>
</dbReference>
<dbReference type="Pfam" id="PF02729">
    <property type="entry name" value="OTCace_N"/>
    <property type="match status" value="1"/>
</dbReference>
<dbReference type="PRINTS" id="PR00100">
    <property type="entry name" value="AOTCASE"/>
</dbReference>
<dbReference type="PRINTS" id="PR00102">
    <property type="entry name" value="OTCASE"/>
</dbReference>
<dbReference type="SUPFAM" id="SSF53671">
    <property type="entry name" value="Aspartate/ornithine carbamoyltransferase"/>
    <property type="match status" value="1"/>
</dbReference>
<dbReference type="PROSITE" id="PS00097">
    <property type="entry name" value="CARBAMOYLTRANSFERASE"/>
    <property type="match status" value="1"/>
</dbReference>
<keyword id="KW-0056">Arginine metabolism</keyword>
<keyword id="KW-0963">Cytoplasm</keyword>
<keyword id="KW-0808">Transferase</keyword>
<accession>A7FWM4</accession>
<reference key="1">
    <citation type="journal article" date="2007" name="PLoS ONE">
        <title>Analysis of the neurotoxin complex genes in Clostridium botulinum A1-A4 and B1 strains: BoNT/A3, /Ba4 and /B1 clusters are located within plasmids.</title>
        <authorList>
            <person name="Smith T.J."/>
            <person name="Hill K.K."/>
            <person name="Foley B.T."/>
            <person name="Detter J.C."/>
            <person name="Munk A.C."/>
            <person name="Bruce D.C."/>
            <person name="Doggett N.A."/>
            <person name="Smith L.A."/>
            <person name="Marks J.D."/>
            <person name="Xie G."/>
            <person name="Brettin T.S."/>
        </authorList>
    </citation>
    <scope>NUCLEOTIDE SEQUENCE [LARGE SCALE GENOMIC DNA]</scope>
    <source>
        <strain>ATCC 19397 / Type A</strain>
    </source>
</reference>
<organism>
    <name type="scientific">Clostridium botulinum (strain ATCC 19397 / Type A)</name>
    <dbReference type="NCBI Taxonomy" id="441770"/>
    <lineage>
        <taxon>Bacteria</taxon>
        <taxon>Bacillati</taxon>
        <taxon>Bacillota</taxon>
        <taxon>Clostridia</taxon>
        <taxon>Eubacteriales</taxon>
        <taxon>Clostridiaceae</taxon>
        <taxon>Clostridium</taxon>
    </lineage>
</organism>
<proteinExistence type="inferred from homology"/>
<comment type="function">
    <text evidence="1">Reversibly catalyzes the transfer of the carbamoyl group from carbamoyl phosphate (CP) to the N(epsilon) atom of ornithine (ORN) to produce L-citrulline.</text>
</comment>
<comment type="catalytic activity">
    <reaction evidence="2">
        <text>carbamoyl phosphate + L-ornithine = L-citrulline + phosphate + H(+)</text>
        <dbReference type="Rhea" id="RHEA:19513"/>
        <dbReference type="ChEBI" id="CHEBI:15378"/>
        <dbReference type="ChEBI" id="CHEBI:43474"/>
        <dbReference type="ChEBI" id="CHEBI:46911"/>
        <dbReference type="ChEBI" id="CHEBI:57743"/>
        <dbReference type="ChEBI" id="CHEBI:58228"/>
        <dbReference type="EC" id="2.1.3.3"/>
    </reaction>
</comment>
<comment type="pathway">
    <text evidence="2">Amino-acid degradation; L-arginine degradation via ADI pathway; carbamoyl phosphate from L-arginine: step 2/2.</text>
</comment>
<comment type="subcellular location">
    <subcellularLocation>
        <location evidence="2">Cytoplasm</location>
    </subcellularLocation>
</comment>
<comment type="similarity">
    <text evidence="2">Belongs to the aspartate/ornithine carbamoyltransferase superfamily. OTCase family.</text>
</comment>